<organism>
    <name type="scientific">Oryza sativa subsp. japonica</name>
    <name type="common">Rice</name>
    <dbReference type="NCBI Taxonomy" id="39947"/>
    <lineage>
        <taxon>Eukaryota</taxon>
        <taxon>Viridiplantae</taxon>
        <taxon>Streptophyta</taxon>
        <taxon>Embryophyta</taxon>
        <taxon>Tracheophyta</taxon>
        <taxon>Spermatophyta</taxon>
        <taxon>Magnoliopsida</taxon>
        <taxon>Liliopsida</taxon>
        <taxon>Poales</taxon>
        <taxon>Poaceae</taxon>
        <taxon>BOP clade</taxon>
        <taxon>Oryzoideae</taxon>
        <taxon>Oryzeae</taxon>
        <taxon>Oryzinae</taxon>
        <taxon>Oryza</taxon>
        <taxon>Oryza sativa</taxon>
    </lineage>
</organism>
<gene>
    <name type="primary">AMT3-3</name>
    <name type="ordered locus">Os02g0550800</name>
    <name type="ordered locus">LOC_Os02g34580</name>
    <name type="ORF">OsJ_07097</name>
    <name type="ORF">P0451A10.33</name>
</gene>
<proteinExistence type="evidence at transcript level"/>
<name>AMT33_ORYSJ</name>
<feature type="chain" id="PRO_0000385652" description="Ammonium transporter 3 member 3">
    <location>
        <begin position="1"/>
        <end position="480"/>
    </location>
</feature>
<feature type="transmembrane region" description="Helical" evidence="2">
    <location>
        <begin position="31"/>
        <end position="51"/>
    </location>
</feature>
<feature type="transmembrane region" description="Helical" evidence="2">
    <location>
        <begin position="59"/>
        <end position="79"/>
    </location>
</feature>
<feature type="transmembrane region" description="Helical" evidence="2">
    <location>
        <begin position="135"/>
        <end position="155"/>
    </location>
</feature>
<feature type="transmembrane region" description="Helical" evidence="2">
    <location>
        <begin position="169"/>
        <end position="189"/>
    </location>
</feature>
<feature type="transmembrane region" description="Helical" evidence="2">
    <location>
        <begin position="198"/>
        <end position="218"/>
    </location>
</feature>
<feature type="transmembrane region" description="Helical" evidence="2">
    <location>
        <begin position="233"/>
        <end position="253"/>
    </location>
</feature>
<feature type="transmembrane region" description="Helical" evidence="2">
    <location>
        <begin position="265"/>
        <end position="287"/>
    </location>
</feature>
<feature type="transmembrane region" description="Helical" evidence="2">
    <location>
        <begin position="292"/>
        <end position="314"/>
    </location>
</feature>
<feature type="transmembrane region" description="Helical" evidence="2">
    <location>
        <begin position="318"/>
        <end position="337"/>
    </location>
</feature>
<feature type="transmembrane region" description="Helical" evidence="2">
    <location>
        <begin position="361"/>
        <end position="381"/>
    </location>
</feature>
<feature type="transmembrane region" description="Helical" evidence="2">
    <location>
        <begin position="407"/>
        <end position="427"/>
    </location>
</feature>
<feature type="sequence conflict" description="In Ref. 5; AK108711." evidence="3" ref="5">
    <location>
        <position position="54"/>
    </location>
</feature>
<feature type="sequence conflict" description="In Ref. 5; AK108711." evidence="3" ref="5">
    <original>I</original>
    <variation>T</variation>
    <location>
        <position position="420"/>
    </location>
</feature>
<accession>Q69T29</accession>
<accession>A0A0P0VK71</accession>
<evidence type="ECO:0000250" key="1"/>
<evidence type="ECO:0000255" key="2"/>
<evidence type="ECO:0000305" key="3"/>
<dbReference type="EMBL" id="AP004775">
    <property type="protein sequence ID" value="BAD33268.1"/>
    <property type="molecule type" value="Genomic_DNA"/>
</dbReference>
<dbReference type="EMBL" id="AP008208">
    <property type="protein sequence ID" value="BAF09011.1"/>
    <property type="molecule type" value="Genomic_DNA"/>
</dbReference>
<dbReference type="EMBL" id="AP014958">
    <property type="protein sequence ID" value="BAS79163.1"/>
    <property type="molecule type" value="Genomic_DNA"/>
</dbReference>
<dbReference type="EMBL" id="CM000139">
    <property type="protein sequence ID" value="EAZ23404.1"/>
    <property type="molecule type" value="Genomic_DNA"/>
</dbReference>
<dbReference type="EMBL" id="AK108711">
    <property type="status" value="NOT_ANNOTATED_CDS"/>
    <property type="molecule type" value="mRNA"/>
</dbReference>
<dbReference type="RefSeq" id="XP_015626434.1">
    <property type="nucleotide sequence ID" value="XM_015770948.1"/>
</dbReference>
<dbReference type="RefSeq" id="XP_015626435.1">
    <property type="nucleotide sequence ID" value="XM_015770949.1"/>
</dbReference>
<dbReference type="SMR" id="Q69T29"/>
<dbReference type="FunCoup" id="Q69T29">
    <property type="interactions" value="261"/>
</dbReference>
<dbReference type="STRING" id="39947.Q69T29"/>
<dbReference type="PaxDb" id="39947-Q69T29"/>
<dbReference type="EnsemblPlants" id="Os02t0550800-01">
    <property type="protein sequence ID" value="Os02t0550800-01"/>
    <property type="gene ID" value="Os02g0550800"/>
</dbReference>
<dbReference type="Gramene" id="Os02t0550800-01">
    <property type="protein sequence ID" value="Os02t0550800-01"/>
    <property type="gene ID" value="Os02g0550800"/>
</dbReference>
<dbReference type="KEGG" id="dosa:Os02g0550800"/>
<dbReference type="eggNOG" id="KOG0682">
    <property type="taxonomic scope" value="Eukaryota"/>
</dbReference>
<dbReference type="HOGENOM" id="CLU_000445_33_4_1"/>
<dbReference type="InParanoid" id="Q69T29"/>
<dbReference type="OMA" id="NDITHHN"/>
<dbReference type="OrthoDB" id="534912at2759"/>
<dbReference type="Proteomes" id="UP000000763">
    <property type="component" value="Chromosome 2"/>
</dbReference>
<dbReference type="Proteomes" id="UP000007752">
    <property type="component" value="Chromosome 2"/>
</dbReference>
<dbReference type="Proteomes" id="UP000059680">
    <property type="component" value="Chromosome 2"/>
</dbReference>
<dbReference type="GO" id="GO:0005886">
    <property type="term" value="C:plasma membrane"/>
    <property type="evidence" value="ECO:0000318"/>
    <property type="project" value="GO_Central"/>
</dbReference>
<dbReference type="GO" id="GO:0008519">
    <property type="term" value="F:ammonium channel activity"/>
    <property type="evidence" value="ECO:0000318"/>
    <property type="project" value="GO_Central"/>
</dbReference>
<dbReference type="GO" id="GO:0072488">
    <property type="term" value="P:ammonium transmembrane transport"/>
    <property type="evidence" value="ECO:0000318"/>
    <property type="project" value="GO_Central"/>
</dbReference>
<dbReference type="FunFam" id="1.10.3430.10:FF:000005">
    <property type="entry name" value="Ammonium transporter"/>
    <property type="match status" value="1"/>
</dbReference>
<dbReference type="Gene3D" id="1.10.3430.10">
    <property type="entry name" value="Ammonium transporter AmtB like domains"/>
    <property type="match status" value="1"/>
</dbReference>
<dbReference type="InterPro" id="IPR029020">
    <property type="entry name" value="Ammonium/urea_transptr"/>
</dbReference>
<dbReference type="InterPro" id="IPR001905">
    <property type="entry name" value="Ammonium_transpt"/>
</dbReference>
<dbReference type="InterPro" id="IPR018047">
    <property type="entry name" value="Ammonium_transpt_CS"/>
</dbReference>
<dbReference type="InterPro" id="IPR024041">
    <property type="entry name" value="NH4_transpt_AmtB-like_dom"/>
</dbReference>
<dbReference type="NCBIfam" id="TIGR00836">
    <property type="entry name" value="amt"/>
    <property type="match status" value="1"/>
</dbReference>
<dbReference type="PANTHER" id="PTHR43029:SF8">
    <property type="entry name" value="AMMONIUM TRANSPORTER 3 MEMBER 3"/>
    <property type="match status" value="1"/>
</dbReference>
<dbReference type="PANTHER" id="PTHR43029">
    <property type="entry name" value="AMMONIUM TRANSPORTER MEP2"/>
    <property type="match status" value="1"/>
</dbReference>
<dbReference type="Pfam" id="PF00909">
    <property type="entry name" value="Ammonium_transp"/>
    <property type="match status" value="1"/>
</dbReference>
<dbReference type="SUPFAM" id="SSF111352">
    <property type="entry name" value="Ammonium transporter"/>
    <property type="match status" value="1"/>
</dbReference>
<dbReference type="PROSITE" id="PS01219">
    <property type="entry name" value="AMMONIUM_TRANSP"/>
    <property type="match status" value="1"/>
</dbReference>
<sequence>MAAGAIPMAYQTTPSSPDWLNKGDNAWQMTSATLVGLQSMPGLVILYGSIVKKKWAINSAFMALYAFAAVWICWVVWAYNMSFGDRLLPFWGKARPALGQSFLVAQSELTATAIRYHNGSAEAPMLKPLYPVATMVYFQCMFASITIIILAGSLLGRMNIKAWMAFVPLWITFSYTVCAFSLWGGGFLFQWGVIDYSGGYVIHLSSGIAGLTAAYWVGPRSASDRERFPPNNILLVLAGAGLLWLGWTGFNGGDPYSANIDSSMAVLNTHICASTSLLVWTILDVFFFGKPSVIGAVQGMITGLVCITPGAGLVQGWAAIVMGILSGSIPWYTMMVLHKKWSFMQRIDDTLGVFHTHAVAGFLGGATTGLFAEPILCSLFLSIPDSKGAFYGGPGGSQFGKQIAGALFVTAWNIVITSIICVIISLILPLRIADQELLIGDDAVHGEEAYAIWAEGELNDMTHHNESTHSGVSVGVTQNV</sequence>
<keyword id="KW-0924">Ammonia transport</keyword>
<keyword id="KW-0472">Membrane</keyword>
<keyword id="KW-1185">Reference proteome</keyword>
<keyword id="KW-0812">Transmembrane</keyword>
<keyword id="KW-1133">Transmembrane helix</keyword>
<keyword id="KW-0813">Transport</keyword>
<reference key="1">
    <citation type="journal article" date="2005" name="Nature">
        <title>The map-based sequence of the rice genome.</title>
        <authorList>
            <consortium name="International rice genome sequencing project (IRGSP)"/>
        </authorList>
    </citation>
    <scope>NUCLEOTIDE SEQUENCE [LARGE SCALE GENOMIC DNA]</scope>
    <source>
        <strain>cv. Nipponbare</strain>
    </source>
</reference>
<reference key="2">
    <citation type="journal article" date="2008" name="Nucleic Acids Res.">
        <title>The rice annotation project database (RAP-DB): 2008 update.</title>
        <authorList>
            <consortium name="The rice annotation project (RAP)"/>
        </authorList>
    </citation>
    <scope>GENOME REANNOTATION</scope>
    <source>
        <strain>cv. Nipponbare</strain>
    </source>
</reference>
<reference key="3">
    <citation type="journal article" date="2013" name="Rice">
        <title>Improvement of the Oryza sativa Nipponbare reference genome using next generation sequence and optical map data.</title>
        <authorList>
            <person name="Kawahara Y."/>
            <person name="de la Bastide M."/>
            <person name="Hamilton J.P."/>
            <person name="Kanamori H."/>
            <person name="McCombie W.R."/>
            <person name="Ouyang S."/>
            <person name="Schwartz D.C."/>
            <person name="Tanaka T."/>
            <person name="Wu J."/>
            <person name="Zhou S."/>
            <person name="Childs K.L."/>
            <person name="Davidson R.M."/>
            <person name="Lin H."/>
            <person name="Quesada-Ocampo L."/>
            <person name="Vaillancourt B."/>
            <person name="Sakai H."/>
            <person name="Lee S.S."/>
            <person name="Kim J."/>
            <person name="Numa H."/>
            <person name="Itoh T."/>
            <person name="Buell C.R."/>
            <person name="Matsumoto T."/>
        </authorList>
    </citation>
    <scope>GENOME REANNOTATION</scope>
    <source>
        <strain>cv. Nipponbare</strain>
    </source>
</reference>
<reference key="4">
    <citation type="journal article" date="2005" name="PLoS Biol.">
        <title>The genomes of Oryza sativa: a history of duplications.</title>
        <authorList>
            <person name="Yu J."/>
            <person name="Wang J."/>
            <person name="Lin W."/>
            <person name="Li S."/>
            <person name="Li H."/>
            <person name="Zhou J."/>
            <person name="Ni P."/>
            <person name="Dong W."/>
            <person name="Hu S."/>
            <person name="Zeng C."/>
            <person name="Zhang J."/>
            <person name="Zhang Y."/>
            <person name="Li R."/>
            <person name="Xu Z."/>
            <person name="Li S."/>
            <person name="Li X."/>
            <person name="Zheng H."/>
            <person name="Cong L."/>
            <person name="Lin L."/>
            <person name="Yin J."/>
            <person name="Geng J."/>
            <person name="Li G."/>
            <person name="Shi J."/>
            <person name="Liu J."/>
            <person name="Lv H."/>
            <person name="Li J."/>
            <person name="Wang J."/>
            <person name="Deng Y."/>
            <person name="Ran L."/>
            <person name="Shi X."/>
            <person name="Wang X."/>
            <person name="Wu Q."/>
            <person name="Li C."/>
            <person name="Ren X."/>
            <person name="Wang J."/>
            <person name="Wang X."/>
            <person name="Li D."/>
            <person name="Liu D."/>
            <person name="Zhang X."/>
            <person name="Ji Z."/>
            <person name="Zhao W."/>
            <person name="Sun Y."/>
            <person name="Zhang Z."/>
            <person name="Bao J."/>
            <person name="Han Y."/>
            <person name="Dong L."/>
            <person name="Ji J."/>
            <person name="Chen P."/>
            <person name="Wu S."/>
            <person name="Liu J."/>
            <person name="Xiao Y."/>
            <person name="Bu D."/>
            <person name="Tan J."/>
            <person name="Yang L."/>
            <person name="Ye C."/>
            <person name="Zhang J."/>
            <person name="Xu J."/>
            <person name="Zhou Y."/>
            <person name="Yu Y."/>
            <person name="Zhang B."/>
            <person name="Zhuang S."/>
            <person name="Wei H."/>
            <person name="Liu B."/>
            <person name="Lei M."/>
            <person name="Yu H."/>
            <person name="Li Y."/>
            <person name="Xu H."/>
            <person name="Wei S."/>
            <person name="He X."/>
            <person name="Fang L."/>
            <person name="Zhang Z."/>
            <person name="Zhang Y."/>
            <person name="Huang X."/>
            <person name="Su Z."/>
            <person name="Tong W."/>
            <person name="Li J."/>
            <person name="Tong Z."/>
            <person name="Li S."/>
            <person name="Ye J."/>
            <person name="Wang L."/>
            <person name="Fang L."/>
            <person name="Lei T."/>
            <person name="Chen C.-S."/>
            <person name="Chen H.-C."/>
            <person name="Xu Z."/>
            <person name="Li H."/>
            <person name="Huang H."/>
            <person name="Zhang F."/>
            <person name="Xu H."/>
            <person name="Li N."/>
            <person name="Zhao C."/>
            <person name="Li S."/>
            <person name="Dong L."/>
            <person name="Huang Y."/>
            <person name="Li L."/>
            <person name="Xi Y."/>
            <person name="Qi Q."/>
            <person name="Li W."/>
            <person name="Zhang B."/>
            <person name="Hu W."/>
            <person name="Zhang Y."/>
            <person name="Tian X."/>
            <person name="Jiao Y."/>
            <person name="Liang X."/>
            <person name="Jin J."/>
            <person name="Gao L."/>
            <person name="Zheng W."/>
            <person name="Hao B."/>
            <person name="Liu S.-M."/>
            <person name="Wang W."/>
            <person name="Yuan L."/>
            <person name="Cao M."/>
            <person name="McDermott J."/>
            <person name="Samudrala R."/>
            <person name="Wang J."/>
            <person name="Wong G.K.-S."/>
            <person name="Yang H."/>
        </authorList>
    </citation>
    <scope>NUCLEOTIDE SEQUENCE [LARGE SCALE GENOMIC DNA]</scope>
    <source>
        <strain>cv. Nipponbare</strain>
    </source>
</reference>
<reference key="5">
    <citation type="journal article" date="2003" name="Science">
        <title>Collection, mapping, and annotation of over 28,000 cDNA clones from japonica rice.</title>
        <authorList>
            <consortium name="The rice full-length cDNA consortium"/>
        </authorList>
    </citation>
    <scope>NUCLEOTIDE SEQUENCE [LARGE SCALE MRNA]</scope>
    <source>
        <strain>cv. Nipponbare</strain>
    </source>
</reference>
<protein>
    <recommendedName>
        <fullName>Ammonium transporter 3 member 3</fullName>
        <shortName>OsAMT3;3</shortName>
    </recommendedName>
</protein>
<comment type="function">
    <text evidence="1">Involved in ammonium transport.</text>
</comment>
<comment type="subcellular location">
    <subcellularLocation>
        <location evidence="3">Membrane</location>
        <topology evidence="3">Multi-pass membrane protein</topology>
    </subcellularLocation>
</comment>
<comment type="similarity">
    <text evidence="3">Belongs to the ammonia transporter channel (TC 1.A.11.2) family.</text>
</comment>